<dbReference type="EC" id="2.4.2.21" evidence="1"/>
<dbReference type="EMBL" id="CP000139">
    <property type="protein sequence ID" value="ABR40782.1"/>
    <property type="molecule type" value="Genomic_DNA"/>
</dbReference>
<dbReference type="RefSeq" id="WP_005846445.1">
    <property type="nucleotide sequence ID" value="NZ_CAXVNH010000010.1"/>
</dbReference>
<dbReference type="SMR" id="A6L518"/>
<dbReference type="STRING" id="435590.BVU_3150"/>
<dbReference type="PaxDb" id="435590-BVU_3150"/>
<dbReference type="GeneID" id="5304111"/>
<dbReference type="KEGG" id="bvu:BVU_3150"/>
<dbReference type="eggNOG" id="COG2038">
    <property type="taxonomic scope" value="Bacteria"/>
</dbReference>
<dbReference type="HOGENOM" id="CLU_002982_0_0_10"/>
<dbReference type="BioCyc" id="BVUL435590:G1G59-3273-MONOMER"/>
<dbReference type="UniPathway" id="UPA00061">
    <property type="reaction ID" value="UER00516"/>
</dbReference>
<dbReference type="Proteomes" id="UP000002861">
    <property type="component" value="Chromosome"/>
</dbReference>
<dbReference type="GO" id="GO:0008939">
    <property type="term" value="F:nicotinate-nucleotide-dimethylbenzimidazole phosphoribosyltransferase activity"/>
    <property type="evidence" value="ECO:0007669"/>
    <property type="project" value="UniProtKB-UniRule"/>
</dbReference>
<dbReference type="GO" id="GO:0009236">
    <property type="term" value="P:cobalamin biosynthetic process"/>
    <property type="evidence" value="ECO:0007669"/>
    <property type="project" value="UniProtKB-KW"/>
</dbReference>
<dbReference type="CDD" id="cd02439">
    <property type="entry name" value="DMB-PRT_CobT"/>
    <property type="match status" value="1"/>
</dbReference>
<dbReference type="FunFam" id="3.40.50.10210:FF:000001">
    <property type="entry name" value="Nicotinate-nucleotide--dimethylbenzimidazole phosphoribosyltransferase"/>
    <property type="match status" value="1"/>
</dbReference>
<dbReference type="Gene3D" id="1.10.1610.10">
    <property type="match status" value="1"/>
</dbReference>
<dbReference type="Gene3D" id="3.40.50.10210">
    <property type="match status" value="1"/>
</dbReference>
<dbReference type="HAMAP" id="MF_00230">
    <property type="entry name" value="CobT"/>
    <property type="match status" value="1"/>
</dbReference>
<dbReference type="InterPro" id="IPR003200">
    <property type="entry name" value="Nict_dMeBzImd_PRibTrfase"/>
</dbReference>
<dbReference type="InterPro" id="IPR017846">
    <property type="entry name" value="Nict_dMeBzImd_PRibTrfase_bact"/>
</dbReference>
<dbReference type="InterPro" id="IPR023195">
    <property type="entry name" value="Nict_dMeBzImd_PRibTrfase_N"/>
</dbReference>
<dbReference type="InterPro" id="IPR036087">
    <property type="entry name" value="Nict_dMeBzImd_PRibTrfase_sf"/>
</dbReference>
<dbReference type="NCBIfam" id="TIGR03160">
    <property type="entry name" value="cobT_DBIPRT"/>
    <property type="match status" value="1"/>
</dbReference>
<dbReference type="NCBIfam" id="NF000996">
    <property type="entry name" value="PRK00105.1"/>
    <property type="match status" value="1"/>
</dbReference>
<dbReference type="PANTHER" id="PTHR43463">
    <property type="entry name" value="NICOTINATE-NUCLEOTIDE--DIMETHYLBENZIMIDAZOLE PHOSPHORIBOSYLTRANSFERASE"/>
    <property type="match status" value="1"/>
</dbReference>
<dbReference type="PANTHER" id="PTHR43463:SF1">
    <property type="entry name" value="NICOTINATE-NUCLEOTIDE--DIMETHYLBENZIMIDAZOLE PHOSPHORIBOSYLTRANSFERASE"/>
    <property type="match status" value="1"/>
</dbReference>
<dbReference type="Pfam" id="PF02277">
    <property type="entry name" value="DBI_PRT"/>
    <property type="match status" value="1"/>
</dbReference>
<dbReference type="SUPFAM" id="SSF52733">
    <property type="entry name" value="Nicotinate mononucleotide:5,6-dimethylbenzimidazole phosphoribosyltransferase (CobT)"/>
    <property type="match status" value="1"/>
</dbReference>
<evidence type="ECO:0000255" key="1">
    <source>
        <dbReference type="HAMAP-Rule" id="MF_00230"/>
    </source>
</evidence>
<organism>
    <name type="scientific">Phocaeicola vulgatus (strain ATCC 8482 / DSM 1447 / JCM 5826 / CCUG 4940 / NBRC 14291 / NCTC 11154)</name>
    <name type="common">Bacteroides vulgatus</name>
    <dbReference type="NCBI Taxonomy" id="435590"/>
    <lineage>
        <taxon>Bacteria</taxon>
        <taxon>Pseudomonadati</taxon>
        <taxon>Bacteroidota</taxon>
        <taxon>Bacteroidia</taxon>
        <taxon>Bacteroidales</taxon>
        <taxon>Bacteroidaceae</taxon>
        <taxon>Phocaeicola</taxon>
    </lineage>
</organism>
<keyword id="KW-0169">Cobalamin biosynthesis</keyword>
<keyword id="KW-0328">Glycosyltransferase</keyword>
<keyword id="KW-0808">Transferase</keyword>
<proteinExistence type="inferred from homology"/>
<accession>A6L518</accession>
<name>COBT_PHOV8</name>
<sequence>MKNFHIEYPDEGLREALIDKINNLTKPKGSLGVLEDLALQIGLIQQTLSPTLSHPHNVLFAADHGIVEEGVSKSPKEITWQQLSNFLHGGAGVNFLCRQHGFKLVLVDSGVDYDLPYEKGIINCSVGRGTHSFLKGPAMSMEEMELCLERGAKITDMIHADGCNVVSFGEMGIGNTSPSSVWMHLLTGISLEQCVGAGSGLDSEGIRHKYNVLKQSVDHYAGDGSAKDIIAWFGGYEMVMAIGGMLRAAELRMIILVDGFIMTNCILAASKLHPEVLSYAIFGHQGDETGHKLVLDAMKVRPLLNLGLRLGEGTGAICAYPIVVSSVNMMNEMDNFAHASITKYF</sequence>
<gene>
    <name evidence="1" type="primary">cobT</name>
    <name type="ordered locus">BVU_3150</name>
</gene>
<reference key="1">
    <citation type="journal article" date="2007" name="PLoS Biol.">
        <title>Evolution of symbiotic bacteria in the distal human intestine.</title>
        <authorList>
            <person name="Xu J."/>
            <person name="Mahowald M.A."/>
            <person name="Ley R.E."/>
            <person name="Lozupone C.A."/>
            <person name="Hamady M."/>
            <person name="Martens E.C."/>
            <person name="Henrissat B."/>
            <person name="Coutinho P.M."/>
            <person name="Minx P."/>
            <person name="Latreille P."/>
            <person name="Cordum H."/>
            <person name="Van Brunt A."/>
            <person name="Kim K."/>
            <person name="Fulton R.S."/>
            <person name="Fulton L.A."/>
            <person name="Clifton S.W."/>
            <person name="Wilson R.K."/>
            <person name="Knight R.D."/>
            <person name="Gordon J.I."/>
        </authorList>
    </citation>
    <scope>NUCLEOTIDE SEQUENCE [LARGE SCALE GENOMIC DNA]</scope>
    <source>
        <strain>ATCC 8482 / DSM 1447 / JCM 5826 / CCUG 4940 / NBRC 14291 / NCTC 11154</strain>
    </source>
</reference>
<protein>
    <recommendedName>
        <fullName evidence="1">Nicotinate-nucleotide--dimethylbenzimidazole phosphoribosyltransferase</fullName>
        <shortName evidence="1">NN:DBI PRT</shortName>
        <ecNumber evidence="1">2.4.2.21</ecNumber>
    </recommendedName>
    <alternativeName>
        <fullName evidence="1">N(1)-alpha-phosphoribosyltransferase</fullName>
    </alternativeName>
</protein>
<feature type="chain" id="PRO_1000021577" description="Nicotinate-nucleotide--dimethylbenzimidazole phosphoribosyltransferase">
    <location>
        <begin position="1"/>
        <end position="345"/>
    </location>
</feature>
<feature type="active site" description="Proton acceptor" evidence="1">
    <location>
        <position position="312"/>
    </location>
</feature>
<comment type="function">
    <text evidence="1">Catalyzes the synthesis of alpha-ribazole-5'-phosphate from nicotinate mononucleotide (NAMN) and 5,6-dimethylbenzimidazole (DMB).</text>
</comment>
<comment type="catalytic activity">
    <reaction evidence="1">
        <text>5,6-dimethylbenzimidazole + nicotinate beta-D-ribonucleotide = alpha-ribazole 5'-phosphate + nicotinate + H(+)</text>
        <dbReference type="Rhea" id="RHEA:11196"/>
        <dbReference type="ChEBI" id="CHEBI:15378"/>
        <dbReference type="ChEBI" id="CHEBI:15890"/>
        <dbReference type="ChEBI" id="CHEBI:32544"/>
        <dbReference type="ChEBI" id="CHEBI:57502"/>
        <dbReference type="ChEBI" id="CHEBI:57918"/>
        <dbReference type="EC" id="2.4.2.21"/>
    </reaction>
</comment>
<comment type="pathway">
    <text evidence="1">Nucleoside biosynthesis; alpha-ribazole biosynthesis; alpha-ribazole from 5,6-dimethylbenzimidazole: step 1/2.</text>
</comment>
<comment type="similarity">
    <text evidence="1">Belongs to the CobT family.</text>
</comment>